<dbReference type="EC" id="2.7.7.18" evidence="1"/>
<dbReference type="EMBL" id="FM200053">
    <property type="protein sequence ID" value="CAR60142.1"/>
    <property type="molecule type" value="Genomic_DNA"/>
</dbReference>
<dbReference type="RefSeq" id="WP_001518902.1">
    <property type="nucleotide sequence ID" value="NC_011147.1"/>
</dbReference>
<dbReference type="SMR" id="B5BCE9"/>
<dbReference type="KEGG" id="sek:SSPA1941"/>
<dbReference type="HOGENOM" id="CLU_069765_0_0_6"/>
<dbReference type="UniPathway" id="UPA00253">
    <property type="reaction ID" value="UER00332"/>
</dbReference>
<dbReference type="Proteomes" id="UP000001869">
    <property type="component" value="Chromosome"/>
</dbReference>
<dbReference type="GO" id="GO:0005524">
    <property type="term" value="F:ATP binding"/>
    <property type="evidence" value="ECO:0007669"/>
    <property type="project" value="UniProtKB-KW"/>
</dbReference>
<dbReference type="GO" id="GO:0004515">
    <property type="term" value="F:nicotinate-nucleotide adenylyltransferase activity"/>
    <property type="evidence" value="ECO:0007669"/>
    <property type="project" value="UniProtKB-UniRule"/>
</dbReference>
<dbReference type="GO" id="GO:0009435">
    <property type="term" value="P:NAD biosynthetic process"/>
    <property type="evidence" value="ECO:0007669"/>
    <property type="project" value="UniProtKB-UniRule"/>
</dbReference>
<dbReference type="CDD" id="cd02165">
    <property type="entry name" value="NMNAT"/>
    <property type="match status" value="1"/>
</dbReference>
<dbReference type="FunFam" id="3.40.50.620:FF:000039">
    <property type="entry name" value="Probable nicotinate-nucleotide adenylyltransferase"/>
    <property type="match status" value="1"/>
</dbReference>
<dbReference type="Gene3D" id="3.40.50.620">
    <property type="entry name" value="HUPs"/>
    <property type="match status" value="1"/>
</dbReference>
<dbReference type="HAMAP" id="MF_00244">
    <property type="entry name" value="NaMN_adenylyltr"/>
    <property type="match status" value="1"/>
</dbReference>
<dbReference type="InterPro" id="IPR004821">
    <property type="entry name" value="Cyt_trans-like"/>
</dbReference>
<dbReference type="InterPro" id="IPR005248">
    <property type="entry name" value="NadD/NMNAT"/>
</dbReference>
<dbReference type="InterPro" id="IPR014729">
    <property type="entry name" value="Rossmann-like_a/b/a_fold"/>
</dbReference>
<dbReference type="NCBIfam" id="TIGR00125">
    <property type="entry name" value="cyt_tran_rel"/>
    <property type="match status" value="1"/>
</dbReference>
<dbReference type="NCBIfam" id="TIGR00482">
    <property type="entry name" value="nicotinate (nicotinamide) nucleotide adenylyltransferase"/>
    <property type="match status" value="1"/>
</dbReference>
<dbReference type="NCBIfam" id="NF000839">
    <property type="entry name" value="PRK00071.1-1"/>
    <property type="match status" value="1"/>
</dbReference>
<dbReference type="NCBIfam" id="NF000840">
    <property type="entry name" value="PRK00071.1-3"/>
    <property type="match status" value="1"/>
</dbReference>
<dbReference type="PANTHER" id="PTHR39321">
    <property type="entry name" value="NICOTINATE-NUCLEOTIDE ADENYLYLTRANSFERASE-RELATED"/>
    <property type="match status" value="1"/>
</dbReference>
<dbReference type="PANTHER" id="PTHR39321:SF3">
    <property type="entry name" value="PHOSPHOPANTETHEINE ADENYLYLTRANSFERASE"/>
    <property type="match status" value="1"/>
</dbReference>
<dbReference type="Pfam" id="PF01467">
    <property type="entry name" value="CTP_transf_like"/>
    <property type="match status" value="1"/>
</dbReference>
<dbReference type="SUPFAM" id="SSF52374">
    <property type="entry name" value="Nucleotidylyl transferase"/>
    <property type="match status" value="1"/>
</dbReference>
<comment type="function">
    <text evidence="1">Catalyzes the reversible adenylation of nicotinate mononucleotide (NaMN) to nicotinic acid adenine dinucleotide (NaAD).</text>
</comment>
<comment type="catalytic activity">
    <reaction evidence="1">
        <text>nicotinate beta-D-ribonucleotide + ATP + H(+) = deamido-NAD(+) + diphosphate</text>
        <dbReference type="Rhea" id="RHEA:22860"/>
        <dbReference type="ChEBI" id="CHEBI:15378"/>
        <dbReference type="ChEBI" id="CHEBI:30616"/>
        <dbReference type="ChEBI" id="CHEBI:33019"/>
        <dbReference type="ChEBI" id="CHEBI:57502"/>
        <dbReference type="ChEBI" id="CHEBI:58437"/>
        <dbReference type="EC" id="2.7.7.18"/>
    </reaction>
</comment>
<comment type="pathway">
    <text evidence="1">Cofactor biosynthesis; NAD(+) biosynthesis; deamido-NAD(+) from nicotinate D-ribonucleotide: step 1/1.</text>
</comment>
<comment type="similarity">
    <text evidence="1">Belongs to the NadD family.</text>
</comment>
<gene>
    <name evidence="1" type="primary">nadD</name>
    <name type="ordered locus">SSPA1941</name>
</gene>
<evidence type="ECO:0000255" key="1">
    <source>
        <dbReference type="HAMAP-Rule" id="MF_00244"/>
    </source>
</evidence>
<reference key="1">
    <citation type="journal article" date="2009" name="BMC Genomics">
        <title>Pseudogene accumulation in the evolutionary histories of Salmonella enterica serovars Paratyphi A and Typhi.</title>
        <authorList>
            <person name="Holt K.E."/>
            <person name="Thomson N.R."/>
            <person name="Wain J."/>
            <person name="Langridge G.C."/>
            <person name="Hasan R."/>
            <person name="Bhutta Z.A."/>
            <person name="Quail M.A."/>
            <person name="Norbertczak H."/>
            <person name="Walker D."/>
            <person name="Simmonds M."/>
            <person name="White B."/>
            <person name="Bason N."/>
            <person name="Mungall K."/>
            <person name="Dougan G."/>
            <person name="Parkhill J."/>
        </authorList>
    </citation>
    <scope>NUCLEOTIDE SEQUENCE [LARGE SCALE GENOMIC DNA]</scope>
    <source>
        <strain>AKU_12601</strain>
    </source>
</reference>
<name>NADD_SALPK</name>
<accession>B5BCE9</accession>
<feature type="chain" id="PRO_1000100792" description="Probable nicotinate-nucleotide adenylyltransferase">
    <location>
        <begin position="1"/>
        <end position="213"/>
    </location>
</feature>
<organism>
    <name type="scientific">Salmonella paratyphi A (strain AKU_12601)</name>
    <dbReference type="NCBI Taxonomy" id="554290"/>
    <lineage>
        <taxon>Bacteria</taxon>
        <taxon>Pseudomonadati</taxon>
        <taxon>Pseudomonadota</taxon>
        <taxon>Gammaproteobacteria</taxon>
        <taxon>Enterobacterales</taxon>
        <taxon>Enterobacteriaceae</taxon>
        <taxon>Salmonella</taxon>
    </lineage>
</organism>
<sequence>MKSLQALFGGTFDPVHYGHLKPVETLANLIGLSRVIIMPNNVPPHRPQPEASSAQRKYMLELAIADKPLFTLDERELQRNAPSYTAQTLKAWREEQGPEAPLAFIIGQDSLLNFPTWHDYDTILDNTHLIVCRRPGYPLEMTQAQHQQWLEQHLTHTPDDLHQLPAGKIYLAETPWLNISATLIRERLEKGESCDDLLPENVLNYINQQGLYR</sequence>
<keyword id="KW-0067">ATP-binding</keyword>
<keyword id="KW-0520">NAD</keyword>
<keyword id="KW-0547">Nucleotide-binding</keyword>
<keyword id="KW-0548">Nucleotidyltransferase</keyword>
<keyword id="KW-0662">Pyridine nucleotide biosynthesis</keyword>
<keyword id="KW-0808">Transferase</keyword>
<protein>
    <recommendedName>
        <fullName evidence="1">Probable nicotinate-nucleotide adenylyltransferase</fullName>
        <ecNumber evidence="1">2.7.7.18</ecNumber>
    </recommendedName>
    <alternativeName>
        <fullName evidence="1">Deamido-NAD(+) diphosphorylase</fullName>
    </alternativeName>
    <alternativeName>
        <fullName evidence="1">Deamido-NAD(+) pyrophosphorylase</fullName>
    </alternativeName>
    <alternativeName>
        <fullName evidence="1">Nicotinate mononucleotide adenylyltransferase</fullName>
        <shortName evidence="1">NaMN adenylyltransferase</shortName>
    </alternativeName>
</protein>
<proteinExistence type="inferred from homology"/>